<gene>
    <name evidence="4" type="primary">cap4</name>
    <name evidence="10" type="ORF">P853_02261</name>
</gene>
<dbReference type="EC" id="3.1.-.-" evidence="1 3"/>
<dbReference type="EMBL" id="JCKK01000002">
    <property type="protein sequence ID" value="EUL38998.1"/>
    <property type="molecule type" value="Genomic_DNA"/>
</dbReference>
<dbReference type="RefSeq" id="WP_032676399.1">
    <property type="nucleotide sequence ID" value="NZ_KI973084.1"/>
</dbReference>
<dbReference type="PDB" id="7YIA">
    <property type="method" value="X-ray"/>
    <property type="resolution" value="2.43 A"/>
    <property type="chains" value="A=1-499"/>
</dbReference>
<dbReference type="PDB" id="7YIB">
    <property type="method" value="X-ray"/>
    <property type="resolution" value="2.18 A"/>
    <property type="chains" value="A=1-499"/>
</dbReference>
<dbReference type="PDBsum" id="7YIA"/>
<dbReference type="PDBsum" id="7YIB"/>
<dbReference type="SMR" id="P0DUD5"/>
<dbReference type="GO" id="GO:0003677">
    <property type="term" value="F:DNA binding"/>
    <property type="evidence" value="ECO:0007669"/>
    <property type="project" value="UniProtKB-KW"/>
</dbReference>
<dbReference type="GO" id="GO:0004519">
    <property type="term" value="F:endonuclease activity"/>
    <property type="evidence" value="ECO:0007669"/>
    <property type="project" value="UniProtKB-KW"/>
</dbReference>
<dbReference type="GO" id="GO:0046872">
    <property type="term" value="F:metal ion binding"/>
    <property type="evidence" value="ECO:0007669"/>
    <property type="project" value="UniProtKB-KW"/>
</dbReference>
<dbReference type="GO" id="GO:0000166">
    <property type="term" value="F:nucleotide binding"/>
    <property type="evidence" value="ECO:0007669"/>
    <property type="project" value="UniProtKB-KW"/>
</dbReference>
<dbReference type="GO" id="GO:0051607">
    <property type="term" value="P:defense response to virus"/>
    <property type="evidence" value="ECO:0007669"/>
    <property type="project" value="UniProtKB-KW"/>
</dbReference>
<dbReference type="InterPro" id="IPR040836">
    <property type="entry name" value="SAVED"/>
</dbReference>
<dbReference type="NCBIfam" id="NF033611">
    <property type="entry name" value="SAVED"/>
    <property type="match status" value="1"/>
</dbReference>
<dbReference type="Pfam" id="PF18145">
    <property type="entry name" value="SAVED"/>
    <property type="match status" value="1"/>
</dbReference>
<proteinExistence type="evidence at protein level"/>
<name>CAP4_ENTH5</name>
<sequence length="499" mass="56198">MATSVLANWHGHDYQARYFWIEASRLKNPQQDFVVEVSYEADGPKAFDDVITRYNPPRRSTGPDRIQADYYQIKFHVTQAASFGFEDLIDPAFIGAETFSILERLKQAKGTEPANSAFHLVTTDRIIDEDPLGEIISNVDGSIRLDKLFDGTTDRSRKGKVRKLWRQHLKLSTDQELEQVLSGFHIQQSQPTLEAMREKVNTCFQIIGLITCETSSDFRFDGAARALRSQERYRFTREQFTALCEEENWIRSEAPESFRNVALRSFSDGPLDIMDALPEHTLSLLSLFEGRFPSPGIEWNDVIKPQVETFLTGIRQTERKVRLYLNTHSSIAMLAGKCLGHKSGVEIELVQKGRMGDSIWSENESQDEPDAVIETETVGTGSDVAVVLSITRNALPKARAYILENQPDIGRIIHVTPANGHGQRSVKNGSHAVAIAEQVSDVVMDADLPVEASLHIFSAAPNAVNFYLGQHTDFLGTCVFYEFDFQRQRDGSYLPSFKV</sequence>
<accession>P0DUD5</accession>
<evidence type="ECO:0000269" key="1">
    <source>
    </source>
</evidence>
<evidence type="ECO:0000269" key="2">
    <source>
    </source>
</evidence>
<evidence type="ECO:0000269" key="3">
    <source>
    </source>
</evidence>
<evidence type="ECO:0000303" key="4">
    <source>
    </source>
</evidence>
<evidence type="ECO:0000303" key="5">
    <source>
    </source>
</evidence>
<evidence type="ECO:0000303" key="6">
    <source>
    </source>
</evidence>
<evidence type="ECO:0000305" key="7"/>
<evidence type="ECO:0000305" key="8">
    <source>
    </source>
</evidence>
<evidence type="ECO:0000305" key="9">
    <source>
    </source>
</evidence>
<evidence type="ECO:0000312" key="10">
    <source>
        <dbReference type="EMBL" id="EUL38998.1"/>
    </source>
</evidence>
<evidence type="ECO:0000312" key="11">
    <source>
        <dbReference type="PDB" id="7YIA"/>
    </source>
</evidence>
<evidence type="ECO:0000312" key="12">
    <source>
        <dbReference type="PDB" id="7YIB"/>
    </source>
</evidence>
<evidence type="ECO:0007829" key="13">
    <source>
        <dbReference type="PDB" id="7YIB"/>
    </source>
</evidence>
<protein>
    <recommendedName>
        <fullName evidence="4">CD-NTase-associated protein 4</fullName>
        <shortName evidence="4">Cap4</shortName>
        <ecNumber evidence="1 3">3.1.-.-</ecNumber>
    </recommendedName>
    <alternativeName>
        <fullName evidence="4">3',3'-cGAMP receptor Cap4</fullName>
    </alternativeName>
    <alternativeName>
        <fullName evidence="6">EcCap4</fullName>
    </alternativeName>
    <alternativeName>
        <fullName evidence="7">Endodeoxyribonuclease Cap4</fullName>
    </alternativeName>
</protein>
<organism>
    <name type="scientific">Enterobacter hormaechei subsp. hoffmannii (strain UCI 50)</name>
    <dbReference type="NCBI Taxonomy" id="1400155"/>
    <lineage>
        <taxon>Bacteria</taxon>
        <taxon>Pseudomonadati</taxon>
        <taxon>Pseudomonadota</taxon>
        <taxon>Gammaproteobacteria</taxon>
        <taxon>Enterobacterales</taxon>
        <taxon>Enterobacteriaceae</taxon>
        <taxon>Enterobacter</taxon>
        <taxon>Enterobacter cloacae complex</taxon>
    </lineage>
</organism>
<comment type="function">
    <text evidence="1 2 3 5">Effector DNase of a CBASS antivirus system (PubMed:32544385, PubMed:36796558). CBASS (cyclic oligonucleotide-based antiphage signaling system) provides immunity against bacteriophages (PubMed:32544385, PubMed:36755092, PubMed:36796558). The CD-NTase protein (CdnD) synthesizes cyclic nucleotides in response to infection; these serve as specific second messenger signals. The signals activate a diverse range of effectors, leading to bacterial cell death and thus abortive phage infection (PubMed:32544385, PubMed:36755092, PubMed:36796558). A type II-C(AAG) CBASS system (PubMed:32839535, PubMed:36755092).</text>
</comment>
<comment type="function">
    <text evidence="1 3">Binds second messenger 3',3',3'-cyclic AMP-AMP-GMP (cAAG) (PubMed:32544385, PubMed:36796558). In the presence of cAAG (synthesized by the cognate CD-NTase protein in the CBASS operon), endonucleolytically degrades dsDNA to approximately 17 bp length fragments, with a preference for 5'-C|NG sites (PubMed:32544385, PubMed:36796558). Only binds DNA in the presence of cAAG (PubMed:32544385). Not activated by c-di-AMP, c-di-GMP, 3',3'-cyclic GMP-AMP (cGAMP) or the second messenger of A.baumanii strain ATCC 27244 (PubMed:32544385).</text>
</comment>
<comment type="function">
    <text evidence="1 2 3">Protects E.coli against phage T2 infection (PubMed:32544385). When the cdnD-cap2-cap3-cap4 operon is introduced in E.coli there is a more than 10(3) decrease in the efficiency of T2 plaque formation (PubMed:32544385, PubMed:36755092). The operon does not protect against phage T5 and only about 10-fold against T7 (PubMed:32544385). Expression of cdnD-cap4 alone protects E.coli against phage T2 infection (PubMed:36796558).</text>
</comment>
<comment type="cofactor">
    <cofactor evidence="3 8">
        <name>Mg(2+)</name>
        <dbReference type="ChEBI" id="CHEBI:18420"/>
    </cofactor>
    <text evidence="3">Probably binds 2 Mg(2+), only 1 is seen in the crystal structure (PubMed:36796558).</text>
</comment>
<comment type="activity regulation">
    <text evidence="1">DNase activity is activated upon ligand binding (cAAG). Inhibited by EDTA.</text>
</comment>
<comment type="subunit">
    <text evidence="1 9">A monomer in the absence of ligand, in its presence it forms oligomers (PubMed:32544385, PubMed:36796558).</text>
</comment>
<comment type="induction">
    <text evidence="8">Part of a CBASS operon consisting of cap4-cdnD-cap2-cap3.</text>
</comment>
<comment type="domain">
    <text evidence="1">The cyclic nucleotide ligand binds in the C-terminal SAVED domain. DNA binding requires the extreme N-terminus.</text>
</comment>
<comment type="similarity">
    <text evidence="8">Belongs to the Cap4 nuclease family.</text>
</comment>
<reference key="1">
    <citation type="submission" date="2014-01" db="EMBL/GenBank/DDBJ databases">
        <title>The Genome Sequence of Enterobacter cloacae UCI 50.</title>
        <authorList>
            <consortium name="The Broad Institute Genomics Platform"/>
            <consortium name="The Broad Institute Genome Sequencing Center for Infectious Disease"/>
            <person name="Murphy C."/>
            <person name="Cosimi L."/>
            <person name="Cerqueira G."/>
            <person name="Feldgarden M."/>
            <person name="Earl A."/>
            <person name="Hung D."/>
            <person name="Onderdonk A.B."/>
            <person name="Ferraro M.J."/>
            <person name="Hooper D."/>
            <person name="Dekker J."/>
            <person name="O'Brien T."/>
            <person name="Huang S."/>
            <person name="Quan V."/>
            <person name="Ernst C."/>
            <person name="Delaney M."/>
            <person name="DuBois A."/>
            <person name="Kim D.S."/>
            <person name="Young S.K."/>
            <person name="Zeng Q."/>
            <person name="Gargeya S."/>
            <person name="Fitzgerald M."/>
            <person name="Abouelleil A."/>
            <person name="Alvarado L."/>
            <person name="Berlin A.M."/>
            <person name="Chapman S.B."/>
            <person name="Gainer-Dewar J."/>
            <person name="Goldberg J."/>
            <person name="Gnerre S."/>
            <person name="Griggs A."/>
            <person name="Gujja S."/>
            <person name="Hansen M."/>
            <person name="Howarth C."/>
            <person name="Imamovic A."/>
            <person name="Ireland A."/>
            <person name="Larimer J."/>
            <person name="McCowan C."/>
            <person name="Murphy C."/>
            <person name="Pearson M."/>
            <person name="Poon T.W."/>
            <person name="Priest M."/>
            <person name="Roberts A."/>
            <person name="Saif S."/>
            <person name="Shea T."/>
            <person name="Sykes S."/>
            <person name="Wortman J."/>
            <person name="Nusbaum C."/>
            <person name="Birren B."/>
        </authorList>
    </citation>
    <scope>NUCLEOTIDE SEQUENCE [LARGE SCALE GENOMIC DNA]</scope>
    <source>
        <strain>UCI 50</strain>
    </source>
</reference>
<reference key="2">
    <citation type="journal article" date="2020" name="Cell">
        <title>CBASS immunity uses CARF-related effectors to sense 3'-5' and 2'-5'-linked cyclic oligonucleotide signals and protect bacteria from phage infection.</title>
        <authorList>
            <person name="Lowey B."/>
            <person name="Whiteley A.T."/>
            <person name="Keszei A.F.A."/>
            <person name="Morehouse B.R."/>
            <person name="Antine S.P."/>
            <person name="Cabrera V.J."/>
            <person name="Kashin D."/>
            <person name="Schwede F."/>
            <person name="Mekalanos J.J."/>
            <person name="Shao S."/>
            <person name="Lee A.S.Y."/>
            <person name="Kranzusch P.J."/>
        </authorList>
    </citation>
    <scope>FUNCTION AS A RECEPTOR</scope>
    <scope>FUNCTION AS AN ENDONUCLEASE</scope>
    <scope>ANTIVIRAL DEFENSE</scope>
    <scope>COFACTOR</scope>
    <scope>ACTIVITY REGULATION</scope>
    <scope>SUBUNIT</scope>
    <scope>DNA-BINDING</scope>
    <scope>NUCLEOTIDE-BINDING</scope>
    <scope>OPERON STRUCTURE</scope>
    <scope>DOMAIN</scope>
    <scope>MUTAGENESIS OF 1-MET--HIS-10; LYS-74; ASN-326; HIS-328; PHE-483 AND TYR-493</scope>
    <source>
        <strain>UCI 50</strain>
    </source>
</reference>
<reference key="3">
    <citation type="journal article" date="2020" name="Nat. Microbiol.">
        <title>Diversity and classification of cyclic-oligonucleotide-based anti-phage signalling systems.</title>
        <authorList>
            <person name="Millman A."/>
            <person name="Melamed S."/>
            <person name="Amitai G."/>
            <person name="Sorek R."/>
        </authorList>
    </citation>
    <scope>CLASSIFICATION AND NOMENCLATURE</scope>
</reference>
<reference key="4">
    <citation type="journal article" date="2023" name="Nature">
        <title>An E1-E2 fusion protein primes antiviral immune signalling in bacteria.</title>
        <authorList>
            <person name="Ledvina H.E."/>
            <person name="Ye Q."/>
            <person name="Gu Y."/>
            <person name="Sullivan A.E."/>
            <person name="Quan Y."/>
            <person name="Lau R.K."/>
            <person name="Zhou H."/>
            <person name="Corbett K.D."/>
            <person name="Whiteley A.T."/>
        </authorList>
    </citation>
    <scope>ANTIVIRAL DEFENSE</scope>
</reference>
<reference evidence="11 12" key="5">
    <citation type="journal article" date="2023" name="Int. J. Biol. Macromol.">
        <title>Specific recognition of cyclic oligonucleotides by Cap4 for phage infection.</title>
        <authorList>
            <person name="Chang J.J."/>
            <person name="You B.J."/>
            <person name="Tien N."/>
            <person name="Wang Y.C."/>
            <person name="Yang C.S."/>
            <person name="Hou M.H."/>
            <person name="Chen Y."/>
        </authorList>
    </citation>
    <scope>X-RAY CRYSTALLOGRAPHY (2.18 ANGSTROMS) IN COMPLEX WITH MAGNESIUM</scope>
    <scope>FUNCTION</scope>
    <scope>ANTIVIRAL DEFENSE</scope>
    <scope>CATALYTIC ACTIVITY</scope>
    <scope>POSSIBLE ACTIVE SITE</scope>
    <scope>PROBABLE OLIGOMERIZATION</scope>
    <scope>DOMAIN</scope>
    <scope>NUCLEOTIDE-BINDING</scope>
    <scope>MUTAGENESIS OF LYS-74; GLN-351; ARG-354 AND 391-THR-ARG-392</scope>
</reference>
<feature type="chain" id="PRO_0000451851" description="CD-NTase-associated protein 4">
    <location>
        <begin position="1"/>
        <end position="499"/>
    </location>
</feature>
<feature type="region of interest" description="N-terminal endonuclease domain" evidence="3 8">
    <location>
        <begin position="1"/>
        <end position="226"/>
    </location>
</feature>
<feature type="region of interest" description="C-terminal SAVED domain" evidence="3 8">
    <location>
        <begin position="258"/>
        <end position="464"/>
    </location>
</feature>
<feature type="active site" evidence="9">
    <location>
        <position position="49"/>
    </location>
</feature>
<feature type="active site" evidence="9">
    <location>
        <position position="72"/>
    </location>
</feature>
<feature type="active site" evidence="9">
    <location>
        <position position="74"/>
    </location>
</feature>
<feature type="binding site" evidence="3 11">
    <location>
        <position position="49"/>
    </location>
    <ligand>
        <name>Mg(2+)</name>
        <dbReference type="ChEBI" id="CHEBI:18420"/>
    </ligand>
</feature>
<feature type="binding site" evidence="3 11">
    <location>
        <position position="73"/>
    </location>
    <ligand>
        <name>Mg(2+)</name>
        <dbReference type="ChEBI" id="CHEBI:18420"/>
    </ligand>
</feature>
<feature type="mutagenesis site" description="Required for nuclease activity, still binds cAAG." evidence="1">
    <location>
        <begin position="1"/>
        <end position="10"/>
    </location>
</feature>
<feature type="mutagenesis site" description="Loss of nuclease activity, still binds cAAG. No longer protects against phage T2." evidence="1 3">
    <original>K</original>
    <variation>A</variation>
    <location>
        <position position="74"/>
    </location>
</feature>
<feature type="mutagenesis site" description="Slight reduction in DNase activity." evidence="1">
    <original>N</original>
    <variation>A</variation>
    <location>
        <position position="326"/>
    </location>
</feature>
<feature type="mutagenesis site" description="No change in DNase activity." evidence="1">
    <original>H</original>
    <variation>A</variation>
    <location>
        <position position="328"/>
    </location>
</feature>
<feature type="mutagenesis site" description="Reduces binding of cAAG about 2.4-fold, significantly reduced protection against phage T2. Complete loss of cAAG binding; when associated with A-355 or with A-391-392-A, loss of resistance to T2." evidence="3">
    <original>Q</original>
    <variation>A</variation>
    <location>
        <position position="351"/>
    </location>
</feature>
<feature type="mutagenesis site" description="Complete loss of cAAG binding; when associated with A-351, loss of resistance to T2." evidence="3">
    <original>R</original>
    <variation>A</variation>
    <location>
        <position position="354"/>
    </location>
</feature>
<feature type="mutagenesis site" description="Complete loss of cAAG binding; when associated with A-351, loss of resistance to T2." evidence="3">
    <original>TR</original>
    <variation>AA</variation>
    <location>
        <begin position="391"/>
        <end position="392"/>
    </location>
</feature>
<feature type="mutagenesis site" description="Reduced DNase activity." evidence="1">
    <original>F</original>
    <variation>A</variation>
    <location>
        <position position="483"/>
    </location>
</feature>
<feature type="mutagenesis site" description="Greatly reduced DNase activity." evidence="1">
    <original>Y</original>
    <variation>A</variation>
    <location>
        <position position="493"/>
    </location>
</feature>
<feature type="helix" evidence="13">
    <location>
        <begin position="12"/>
        <end position="24"/>
    </location>
</feature>
<feature type="helix" evidence="13">
    <location>
        <begin position="25"/>
        <end position="27"/>
    </location>
</feature>
<feature type="helix" evidence="13">
    <location>
        <begin position="29"/>
        <end position="31"/>
    </location>
</feature>
<feature type="strand" evidence="13">
    <location>
        <begin position="34"/>
        <end position="39"/>
    </location>
</feature>
<feature type="strand" evidence="13">
    <location>
        <begin position="49"/>
        <end position="58"/>
    </location>
</feature>
<feature type="strand" evidence="13">
    <location>
        <begin position="61"/>
        <end position="64"/>
    </location>
</feature>
<feature type="strand" evidence="13">
    <location>
        <begin position="66"/>
        <end position="73"/>
    </location>
</feature>
<feature type="helix" evidence="13">
    <location>
        <begin position="85"/>
        <end position="89"/>
    </location>
</feature>
<feature type="helix" evidence="13">
    <location>
        <begin position="91"/>
        <end position="94"/>
    </location>
</feature>
<feature type="helix" evidence="13">
    <location>
        <begin position="101"/>
        <end position="111"/>
    </location>
</feature>
<feature type="strand" evidence="13">
    <location>
        <begin position="114"/>
        <end position="121"/>
    </location>
</feature>
<feature type="strand" evidence="13">
    <location>
        <begin position="123"/>
        <end position="126"/>
    </location>
</feature>
<feature type="helix" evidence="13">
    <location>
        <begin position="131"/>
        <end position="134"/>
    </location>
</feature>
<feature type="turn" evidence="13">
    <location>
        <begin position="138"/>
        <end position="140"/>
    </location>
</feature>
<feature type="helix" evidence="13">
    <location>
        <begin position="145"/>
        <end position="148"/>
    </location>
</feature>
<feature type="helix" evidence="13">
    <location>
        <begin position="157"/>
        <end position="168"/>
    </location>
</feature>
<feature type="helix" evidence="13">
    <location>
        <begin position="174"/>
        <end position="181"/>
    </location>
</feature>
<feature type="strand" evidence="13">
    <location>
        <begin position="184"/>
        <end position="187"/>
    </location>
</feature>
<feature type="helix" evidence="13">
    <location>
        <begin position="193"/>
        <end position="206"/>
    </location>
</feature>
<feature type="helix" evidence="13">
    <location>
        <begin position="219"/>
        <end position="229"/>
    </location>
</feature>
<feature type="strand" evidence="13">
    <location>
        <begin position="234"/>
        <end position="236"/>
    </location>
</feature>
<feature type="helix" evidence="13">
    <location>
        <begin position="237"/>
        <end position="246"/>
    </location>
</feature>
<feature type="strand" evidence="13">
    <location>
        <begin position="259"/>
        <end position="264"/>
    </location>
</feature>
<feature type="turn" evidence="13">
    <location>
        <begin position="270"/>
        <end position="274"/>
    </location>
</feature>
<feature type="helix" evidence="13">
    <location>
        <begin position="278"/>
        <end position="280"/>
    </location>
</feature>
<feature type="strand" evidence="13">
    <location>
        <begin position="281"/>
        <end position="283"/>
    </location>
</feature>
<feature type="helix" evidence="13">
    <location>
        <begin position="284"/>
        <end position="287"/>
    </location>
</feature>
<feature type="turn" evidence="13">
    <location>
        <begin position="288"/>
        <end position="290"/>
    </location>
</feature>
<feature type="helix" evidence="13">
    <location>
        <begin position="297"/>
        <end position="301"/>
    </location>
</feature>
<feature type="helix" evidence="13">
    <location>
        <begin position="303"/>
        <end position="315"/>
    </location>
</feature>
<feature type="strand" evidence="13">
    <location>
        <begin position="319"/>
        <end position="327"/>
    </location>
</feature>
<feature type="helix" evidence="13">
    <location>
        <begin position="329"/>
        <end position="338"/>
    </location>
</feature>
<feature type="turn" evidence="13">
    <location>
        <begin position="341"/>
        <end position="343"/>
    </location>
</feature>
<feature type="strand" evidence="13">
    <location>
        <begin position="346"/>
        <end position="353"/>
    </location>
</feature>
<feature type="strand" evidence="13">
    <location>
        <begin position="356"/>
        <end position="360"/>
    </location>
</feature>
<feature type="strand" evidence="13">
    <location>
        <begin position="372"/>
        <end position="377"/>
    </location>
</feature>
<feature type="strand" evidence="13">
    <location>
        <begin position="382"/>
        <end position="392"/>
    </location>
</feature>
<feature type="helix" evidence="13">
    <location>
        <begin position="395"/>
        <end position="405"/>
    </location>
</feature>
<feature type="strand" evidence="13">
    <location>
        <begin position="409"/>
        <end position="416"/>
    </location>
</feature>
<feature type="helix" evidence="13">
    <location>
        <begin position="429"/>
        <end position="445"/>
    </location>
</feature>
<feature type="strand" evidence="13">
    <location>
        <begin position="454"/>
        <end position="459"/>
    </location>
</feature>
<feature type="helix" evidence="13">
    <location>
        <begin position="462"/>
        <end position="471"/>
    </location>
</feature>
<feature type="helix" evidence="13">
    <location>
        <begin position="472"/>
        <end position="475"/>
    </location>
</feature>
<feature type="strand" evidence="13">
    <location>
        <begin position="477"/>
        <end position="488"/>
    </location>
</feature>
<feature type="strand" evidence="13">
    <location>
        <begin position="492"/>
        <end position="499"/>
    </location>
</feature>
<keyword id="KW-0002">3D-structure</keyword>
<keyword id="KW-0051">Antiviral defense</keyword>
<keyword id="KW-0238">DNA-binding</keyword>
<keyword id="KW-0255">Endonuclease</keyword>
<keyword id="KW-0378">Hydrolase</keyword>
<keyword id="KW-0460">Magnesium</keyword>
<keyword id="KW-0479">Metal-binding</keyword>
<keyword id="KW-0540">Nuclease</keyword>
<keyword id="KW-0547">Nucleotide-binding</keyword>